<comment type="function">
    <text evidence="1">Probable GTPase activator for the Rho-type GTPases by converting them to an inactive GDP-bound state. Regulates the localization and assembly of presynaptic components during presynaptic development and is required for specifying the identity of axons during initial polarity acquisition. In these roles it is thought to act cell autonomously downstream of syg-1 and syg-2 and upstream of syd-2, possibly as a positive regulator of the latter. Required for the control of movement, egg-laying and the correct localization of elks-1 (By similarity).</text>
</comment>
<comment type="subcellular location">
    <subcellularLocation>
        <location evidence="2">Synapse</location>
    </subcellularLocation>
    <text evidence="2">Presynaptic terminals.</text>
</comment>
<keyword id="KW-0217">Developmental protein</keyword>
<keyword id="KW-0221">Differentiation</keyword>
<keyword id="KW-0343">GTPase activation</keyword>
<keyword id="KW-0524">Neurogenesis</keyword>
<keyword id="KW-1185">Reference proteome</keyword>
<keyword id="KW-0770">Synapse</keyword>
<name>SYD1_CAEBR</name>
<organism>
    <name type="scientific">Caenorhabditis briggsae</name>
    <dbReference type="NCBI Taxonomy" id="6238"/>
    <lineage>
        <taxon>Eukaryota</taxon>
        <taxon>Metazoa</taxon>
        <taxon>Ecdysozoa</taxon>
        <taxon>Nematoda</taxon>
        <taxon>Chromadorea</taxon>
        <taxon>Rhabditida</taxon>
        <taxon>Rhabditina</taxon>
        <taxon>Rhabditomorpha</taxon>
        <taxon>Rhabditoidea</taxon>
        <taxon>Rhabditidae</taxon>
        <taxon>Peloderinae</taxon>
        <taxon>Caenorhabditis</taxon>
    </lineage>
</organism>
<feature type="chain" id="PRO_0000309559" description="Rho GTPase-activating protein syd-1">
    <location>
        <begin position="1"/>
        <end position="962"/>
    </location>
</feature>
<feature type="domain" description="C2" evidence="3">
    <location>
        <begin position="572"/>
        <end position="696"/>
    </location>
</feature>
<feature type="domain" description="Rho-GAP" evidence="4">
    <location>
        <begin position="729"/>
        <end position="923"/>
    </location>
</feature>
<feature type="region of interest" description="Disordered" evidence="5">
    <location>
        <begin position="231"/>
        <end position="367"/>
    </location>
</feature>
<feature type="region of interest" description="Disordered" evidence="5">
    <location>
        <begin position="397"/>
        <end position="419"/>
    </location>
</feature>
<feature type="region of interest" description="Disordered" evidence="5">
    <location>
        <begin position="437"/>
        <end position="471"/>
    </location>
</feature>
<feature type="region of interest" description="Disordered" evidence="5">
    <location>
        <begin position="934"/>
        <end position="962"/>
    </location>
</feature>
<feature type="compositionally biased region" description="Polar residues" evidence="5">
    <location>
        <begin position="243"/>
        <end position="261"/>
    </location>
</feature>
<feature type="compositionally biased region" description="Polar residues" evidence="5">
    <location>
        <begin position="323"/>
        <end position="345"/>
    </location>
</feature>
<feature type="compositionally biased region" description="Polar residues" evidence="5">
    <location>
        <begin position="401"/>
        <end position="412"/>
    </location>
</feature>
<feature type="compositionally biased region" description="Polar residues" evidence="5">
    <location>
        <begin position="453"/>
        <end position="471"/>
    </location>
</feature>
<feature type="compositionally biased region" description="Polar residues" evidence="5">
    <location>
        <begin position="934"/>
        <end position="947"/>
    </location>
</feature>
<feature type="site" description="Arginine finger; crucial for GTP hydrolysis by stabilizing the transition state" evidence="4">
    <location>
        <position position="765"/>
    </location>
</feature>
<gene>
    <name evidence="2" type="primary">syd-1</name>
    <name type="ORF">CBG13003</name>
</gene>
<proteinExistence type="inferred from homology"/>
<evidence type="ECO:0000250" key="1"/>
<evidence type="ECO:0000250" key="2">
    <source>
        <dbReference type="UniProtKB" id="Q86NH1"/>
    </source>
</evidence>
<evidence type="ECO:0000255" key="3">
    <source>
        <dbReference type="PROSITE-ProRule" id="PRU00041"/>
    </source>
</evidence>
<evidence type="ECO:0000255" key="4">
    <source>
        <dbReference type="PROSITE-ProRule" id="PRU00172"/>
    </source>
</evidence>
<evidence type="ECO:0000256" key="5">
    <source>
        <dbReference type="SAM" id="MobiDB-lite"/>
    </source>
</evidence>
<sequence length="962" mass="106449">MLPLQGFNMTYPRKGVMPYPSTFLYREEPSVSTTECCCCWLCRLLCCCSTVDSQTALRDRMNASQPPPGGGGRLPDEVYRKIKAVDQGQSTLTQSGIQGLSARTLDENQRGDLVFQLVEIIKKPGQSLGLYLREGNGKDRSDGVFVSRFGDNSELAKSFLMSIDDVVLILSIPRRLLLRIRFSKSMRHEVITSRSSERPVVVFHKYDDRRDSETNAPILSQPTSTANTWLGKKSRQQMEEMRNATTTSTMRAAHASTSSPRNHFAPRLVNGHSQPIGVPSASSASTSDHHYQRFASEPSDSVSRTARVPPPRLASATVRRTESFNSAPGVSSSAPMYTLPRSSTAVPPPDIIGSIPHSARDPLMRSDLPYDPLTGRLSSSVPTDPLLSRSLCSPILPRTLRQPNDSNKSNSLPRRRIMTGGRNVKWRNDVVSTSDLCGEESDGAISAPEYSSPPFSRLTQQQQFRLSNGSPGRTVNDIFSAAEYRNWAGPYDPRGMYGPYPPGQRTTRWSHTYGEQRAPRTSSLPGRTVLAQSLVGSPVLPRHPPPIVQDRPSAVFDRYHVSPLMNRRAPLRAAGPGINVDRLSVSSLTGILYVHILEGRGLKIPEKQKGLTEEMYCVLEVDEQHRARTGVSTIEQKFKWRETFHIDVVNATVSNFFVYSWHPQFRHKLCHKGSLKLLEAFVVDQLNDDRVFALNLEPRGQLIVRIGFHDLQAVFRRTVNPRLNGVFGVPLGRLVQRERRDTPIVLTRLIQEIEKRGVDLSGLYVLCGSVEKKKMLRAQLESNPLGTDLNAENIPDTNVIACLIKDFLRELPEPLISPQIHGMLLEAATVALPNDVQANRTLVLKIIDCLQLSAKNCLLLVLDHLSTILCSSPHNGLTPTRLSLIFAPLLFFCLDAISPYTTSPTSKMAAVRSLDMNQASSSLQMILSIWPSRVNSESGSDSPATSGQKGGGGVSYVSESQC</sequence>
<dbReference type="EMBL" id="HE600938">
    <property type="protein sequence ID" value="CAP31879.3"/>
    <property type="molecule type" value="Genomic_DNA"/>
</dbReference>
<dbReference type="SMR" id="Q61CA4"/>
<dbReference type="FunCoup" id="Q61CA4">
    <property type="interactions" value="237"/>
</dbReference>
<dbReference type="STRING" id="6238.Q61CA4"/>
<dbReference type="WormBase" id="CBG13003a">
    <property type="protein sequence ID" value="CBP46422"/>
    <property type="gene ID" value="WBGene00033849"/>
    <property type="gene designation" value="Cbr-syd-1"/>
</dbReference>
<dbReference type="eggNOG" id="KOG1452">
    <property type="taxonomic scope" value="Eukaryota"/>
</dbReference>
<dbReference type="eggNOG" id="KOG3528">
    <property type="taxonomic scope" value="Eukaryota"/>
</dbReference>
<dbReference type="HOGENOM" id="CLU_003464_0_0_1"/>
<dbReference type="InParanoid" id="Q61CA4"/>
<dbReference type="Proteomes" id="UP000008549">
    <property type="component" value="Unassembled WGS sequence"/>
</dbReference>
<dbReference type="GO" id="GO:0045202">
    <property type="term" value="C:synapse"/>
    <property type="evidence" value="ECO:0000250"/>
    <property type="project" value="UniProtKB"/>
</dbReference>
<dbReference type="GO" id="GO:0097060">
    <property type="term" value="C:synaptic membrane"/>
    <property type="evidence" value="ECO:0000318"/>
    <property type="project" value="GO_Central"/>
</dbReference>
<dbReference type="GO" id="GO:0005096">
    <property type="term" value="F:GTPase activator activity"/>
    <property type="evidence" value="ECO:0000250"/>
    <property type="project" value="UniProtKB"/>
</dbReference>
<dbReference type="GO" id="GO:0090630">
    <property type="term" value="P:activation of GTPase activity"/>
    <property type="evidence" value="ECO:0000250"/>
    <property type="project" value="UniProtKB"/>
</dbReference>
<dbReference type="GO" id="GO:0030154">
    <property type="term" value="P:cell differentiation"/>
    <property type="evidence" value="ECO:0007669"/>
    <property type="project" value="UniProtKB-KW"/>
</dbReference>
<dbReference type="GO" id="GO:0016477">
    <property type="term" value="P:cell migration"/>
    <property type="evidence" value="ECO:0000318"/>
    <property type="project" value="GO_Central"/>
</dbReference>
<dbReference type="GO" id="GO:0030030">
    <property type="term" value="P:cell projection organization"/>
    <property type="evidence" value="ECO:0000250"/>
    <property type="project" value="UniProtKB"/>
</dbReference>
<dbReference type="GO" id="GO:0007399">
    <property type="term" value="P:nervous system development"/>
    <property type="evidence" value="ECO:0007669"/>
    <property type="project" value="UniProtKB-KW"/>
</dbReference>
<dbReference type="GO" id="GO:0046578">
    <property type="term" value="P:regulation of Ras protein signal transduction"/>
    <property type="evidence" value="ECO:0000318"/>
    <property type="project" value="GO_Central"/>
</dbReference>
<dbReference type="GO" id="GO:0007165">
    <property type="term" value="P:signal transduction"/>
    <property type="evidence" value="ECO:0007669"/>
    <property type="project" value="InterPro"/>
</dbReference>
<dbReference type="CDD" id="cd00030">
    <property type="entry name" value="C2"/>
    <property type="match status" value="1"/>
</dbReference>
<dbReference type="FunFam" id="1.10.555.10:FF:000031">
    <property type="entry name" value="rho GTPase-activating protein 100F isoform X6"/>
    <property type="match status" value="1"/>
</dbReference>
<dbReference type="Gene3D" id="2.60.40.150">
    <property type="entry name" value="C2 domain"/>
    <property type="match status" value="1"/>
</dbReference>
<dbReference type="Gene3D" id="1.10.555.10">
    <property type="entry name" value="Rho GTPase activation protein"/>
    <property type="match status" value="1"/>
</dbReference>
<dbReference type="InterPro" id="IPR000008">
    <property type="entry name" value="C2_dom"/>
</dbReference>
<dbReference type="InterPro" id="IPR035892">
    <property type="entry name" value="C2_domain_sf"/>
</dbReference>
<dbReference type="InterPro" id="IPR052118">
    <property type="entry name" value="Rho-GAP_regulator"/>
</dbReference>
<dbReference type="InterPro" id="IPR008936">
    <property type="entry name" value="Rho_GTPase_activation_prot"/>
</dbReference>
<dbReference type="InterPro" id="IPR000198">
    <property type="entry name" value="RhoGAP_dom"/>
</dbReference>
<dbReference type="PANTHER" id="PTHR46150">
    <property type="entry name" value="RHO GTPASE-ACTIVATING PROTEIN 100F"/>
    <property type="match status" value="1"/>
</dbReference>
<dbReference type="PANTHER" id="PTHR46150:SF3">
    <property type="entry name" value="RHO GTPASE-ACTIVATING PROTEIN 100F"/>
    <property type="match status" value="1"/>
</dbReference>
<dbReference type="Pfam" id="PF25336">
    <property type="entry name" value="C2_SYDE"/>
    <property type="match status" value="1"/>
</dbReference>
<dbReference type="Pfam" id="PF00620">
    <property type="entry name" value="RhoGAP"/>
    <property type="match status" value="1"/>
</dbReference>
<dbReference type="SMART" id="SM00239">
    <property type="entry name" value="C2"/>
    <property type="match status" value="1"/>
</dbReference>
<dbReference type="SMART" id="SM00324">
    <property type="entry name" value="RhoGAP"/>
    <property type="match status" value="1"/>
</dbReference>
<dbReference type="SUPFAM" id="SSF49562">
    <property type="entry name" value="C2 domain (Calcium/lipid-binding domain, CaLB)"/>
    <property type="match status" value="1"/>
</dbReference>
<dbReference type="SUPFAM" id="SSF48350">
    <property type="entry name" value="GTPase activation domain, GAP"/>
    <property type="match status" value="1"/>
</dbReference>
<dbReference type="PROSITE" id="PS50004">
    <property type="entry name" value="C2"/>
    <property type="match status" value="1"/>
</dbReference>
<dbReference type="PROSITE" id="PS50238">
    <property type="entry name" value="RHOGAP"/>
    <property type="match status" value="1"/>
</dbReference>
<accession>Q61CA4</accession>
<accession>A8XGV5</accession>
<protein>
    <recommendedName>
        <fullName>Rho GTPase-activating protein syd-1</fullName>
    </recommendedName>
    <alternativeName>
        <fullName>Synapse defective protein 1</fullName>
    </alternativeName>
</protein>
<reference key="1">
    <citation type="journal article" date="2003" name="PLoS Biol.">
        <title>The genome sequence of Caenorhabditis briggsae: a platform for comparative genomics.</title>
        <authorList>
            <person name="Stein L.D."/>
            <person name="Bao Z."/>
            <person name="Blasiar D."/>
            <person name="Blumenthal T."/>
            <person name="Brent M.R."/>
            <person name="Chen N."/>
            <person name="Chinwalla A."/>
            <person name="Clarke L."/>
            <person name="Clee C."/>
            <person name="Coghlan A."/>
            <person name="Coulson A."/>
            <person name="D'Eustachio P."/>
            <person name="Fitch D.H.A."/>
            <person name="Fulton L.A."/>
            <person name="Fulton R.E."/>
            <person name="Griffiths-Jones S."/>
            <person name="Harris T.W."/>
            <person name="Hillier L.W."/>
            <person name="Kamath R."/>
            <person name="Kuwabara P.E."/>
            <person name="Mardis E.R."/>
            <person name="Marra M.A."/>
            <person name="Miner T.L."/>
            <person name="Minx P."/>
            <person name="Mullikin J.C."/>
            <person name="Plumb R.W."/>
            <person name="Rogers J."/>
            <person name="Schein J.E."/>
            <person name="Sohrmann M."/>
            <person name="Spieth J."/>
            <person name="Stajich J.E."/>
            <person name="Wei C."/>
            <person name="Willey D."/>
            <person name="Wilson R.K."/>
            <person name="Durbin R.M."/>
            <person name="Waterston R.H."/>
        </authorList>
    </citation>
    <scope>NUCLEOTIDE SEQUENCE [LARGE SCALE GENOMIC DNA]</scope>
    <source>
        <strain>AF16</strain>
    </source>
</reference>